<comment type="function">
    <text evidence="1">Required for the post-translational delivery of tail-anchored (TA) proteins to the endoplasmic reticulum. Acts as a membrane receptor for soluble GET3, which recognizes and selectively binds the transmembrane domain of TA proteins in the cytosol.</text>
</comment>
<comment type="subunit">
    <text evidence="1">Interacts with GET3.</text>
</comment>
<comment type="subcellular location">
    <subcellularLocation>
        <location evidence="1">Endoplasmic reticulum membrane</location>
        <topology evidence="1">Multi-pass membrane protein</topology>
    </subcellularLocation>
</comment>
<comment type="similarity">
    <text evidence="1">Belongs to the WRB/GET1 family.</text>
</comment>
<accession>A8N7T9</accession>
<sequence length="227" mass="25542">MSLLLTVFLIVFVTQLISWIGQNVLLEWAYNLYLRLSRNSLAARQRSLKTEILNNKTELLKTSAQDQFAKWAKLRRSVDKGLAELEKLNSEIATAKSSFSTKFNAVIWALTSGVNLVIGWWYGRKAVFYLPEGWMGPLTWWFSFPFAPRGSVSVGVWSFACKRVLLVLERMVKELFFAETQAKEVPVGFSPSSSSSSTPNPMSKASSGSPSPRRRTTVTVESEDEKS</sequence>
<proteinExistence type="inferred from homology"/>
<name>GET1_COPC7</name>
<dbReference type="EMBL" id="AACS02000003">
    <property type="protein sequence ID" value="EAU90959.1"/>
    <property type="molecule type" value="Genomic_DNA"/>
</dbReference>
<dbReference type="RefSeq" id="XP_001830895.1">
    <property type="nucleotide sequence ID" value="XM_001830843.2"/>
</dbReference>
<dbReference type="SMR" id="A8N7T9"/>
<dbReference type="FunCoup" id="A8N7T9">
    <property type="interactions" value="216"/>
</dbReference>
<dbReference type="STRING" id="240176.A8N7T9"/>
<dbReference type="GeneID" id="6007348"/>
<dbReference type="KEGG" id="cci:CC1G_02346"/>
<dbReference type="VEuPathDB" id="FungiDB:CC1G_02346"/>
<dbReference type="eggNOG" id="KOG4253">
    <property type="taxonomic scope" value="Eukaryota"/>
</dbReference>
<dbReference type="HOGENOM" id="CLU_089418_1_0_1"/>
<dbReference type="InParanoid" id="A8N7T9"/>
<dbReference type="OMA" id="AEWIISF"/>
<dbReference type="OrthoDB" id="69461at2759"/>
<dbReference type="Proteomes" id="UP000001861">
    <property type="component" value="Unassembled WGS sequence"/>
</dbReference>
<dbReference type="GO" id="GO:0005789">
    <property type="term" value="C:endoplasmic reticulum membrane"/>
    <property type="evidence" value="ECO:0007669"/>
    <property type="project" value="UniProtKB-SubCell"/>
</dbReference>
<dbReference type="GO" id="GO:0043529">
    <property type="term" value="C:GET complex"/>
    <property type="evidence" value="ECO:0007669"/>
    <property type="project" value="InterPro"/>
</dbReference>
<dbReference type="GO" id="GO:0043495">
    <property type="term" value="F:protein-membrane adaptor activity"/>
    <property type="evidence" value="ECO:0007669"/>
    <property type="project" value="TreeGrafter"/>
</dbReference>
<dbReference type="GO" id="GO:0071816">
    <property type="term" value="P:tail-anchored membrane protein insertion into ER membrane"/>
    <property type="evidence" value="ECO:0007669"/>
    <property type="project" value="InterPro"/>
</dbReference>
<dbReference type="Gene3D" id="1.10.287.660">
    <property type="entry name" value="Helix hairpin bin"/>
    <property type="match status" value="1"/>
</dbReference>
<dbReference type="HAMAP" id="MF_03113">
    <property type="entry name" value="Get1"/>
    <property type="match status" value="1"/>
</dbReference>
<dbReference type="InterPro" id="IPR028945">
    <property type="entry name" value="Get1"/>
</dbReference>
<dbReference type="InterPro" id="IPR027538">
    <property type="entry name" value="Get1_fungi"/>
</dbReference>
<dbReference type="InterPro" id="IPR029012">
    <property type="entry name" value="Helix_hairpin_bin_sf"/>
</dbReference>
<dbReference type="PANTHER" id="PTHR42650:SF1">
    <property type="entry name" value="GUIDED ENTRY OF TAIL-ANCHORED PROTEINS FACTOR 1"/>
    <property type="match status" value="1"/>
</dbReference>
<dbReference type="PANTHER" id="PTHR42650">
    <property type="entry name" value="TAIL-ANCHORED PROTEIN INSERTION RECEPTOR WRB"/>
    <property type="match status" value="1"/>
</dbReference>
<dbReference type="Pfam" id="PF04420">
    <property type="entry name" value="CHD5"/>
    <property type="match status" value="1"/>
</dbReference>
<gene>
    <name evidence="1" type="primary">GET1</name>
    <name type="ORF">CC1G_02346</name>
</gene>
<protein>
    <recommendedName>
        <fullName evidence="1">Protein GET1</fullName>
    </recommendedName>
    <alternativeName>
        <fullName evidence="1">Guided entry of tail-anchored proteins 1</fullName>
    </alternativeName>
</protein>
<evidence type="ECO:0000255" key="1">
    <source>
        <dbReference type="HAMAP-Rule" id="MF_03113"/>
    </source>
</evidence>
<evidence type="ECO:0000256" key="2">
    <source>
        <dbReference type="SAM" id="MobiDB-lite"/>
    </source>
</evidence>
<reference key="1">
    <citation type="journal article" date="2010" name="Proc. Natl. Acad. Sci. U.S.A.">
        <title>Insights into evolution of multicellular fungi from the assembled chromosomes of the mushroom Coprinopsis cinerea (Coprinus cinereus).</title>
        <authorList>
            <person name="Stajich J.E."/>
            <person name="Wilke S.K."/>
            <person name="Ahren D."/>
            <person name="Au C.H."/>
            <person name="Birren B.W."/>
            <person name="Borodovsky M."/>
            <person name="Burns C."/>
            <person name="Canbaeck B."/>
            <person name="Casselton L.A."/>
            <person name="Cheng C.K."/>
            <person name="Deng J."/>
            <person name="Dietrich F.S."/>
            <person name="Fargo D.C."/>
            <person name="Farman M.L."/>
            <person name="Gathman A.C."/>
            <person name="Goldberg J."/>
            <person name="Guigo R."/>
            <person name="Hoegger P.J."/>
            <person name="Hooker J.B."/>
            <person name="Huggins A."/>
            <person name="James T.Y."/>
            <person name="Kamada T."/>
            <person name="Kilaru S."/>
            <person name="Kodira C."/>
            <person name="Kuees U."/>
            <person name="Kupfer D."/>
            <person name="Kwan H.S."/>
            <person name="Lomsadze A."/>
            <person name="Li W."/>
            <person name="Lilly W.W."/>
            <person name="Ma L.-J."/>
            <person name="Mackey A.J."/>
            <person name="Manning G."/>
            <person name="Martin F."/>
            <person name="Muraguchi H."/>
            <person name="Natvig D.O."/>
            <person name="Palmerini H."/>
            <person name="Ramesh M.A."/>
            <person name="Rehmeyer C.J."/>
            <person name="Roe B.A."/>
            <person name="Shenoy N."/>
            <person name="Stanke M."/>
            <person name="Ter-Hovhannisyan V."/>
            <person name="Tunlid A."/>
            <person name="Velagapudi R."/>
            <person name="Vision T.J."/>
            <person name="Zeng Q."/>
            <person name="Zolan M.E."/>
            <person name="Pukkila P.J."/>
        </authorList>
    </citation>
    <scope>NUCLEOTIDE SEQUENCE [LARGE SCALE GENOMIC DNA]</scope>
    <source>
        <strain>Okayama-7 / 130 / ATCC MYA-4618 / FGSC 9003</strain>
    </source>
</reference>
<organism>
    <name type="scientific">Coprinopsis cinerea (strain Okayama-7 / 130 / ATCC MYA-4618 / FGSC 9003)</name>
    <name type="common">Inky cap fungus</name>
    <name type="synonym">Hormographiella aspergillata</name>
    <dbReference type="NCBI Taxonomy" id="240176"/>
    <lineage>
        <taxon>Eukaryota</taxon>
        <taxon>Fungi</taxon>
        <taxon>Dikarya</taxon>
        <taxon>Basidiomycota</taxon>
        <taxon>Agaricomycotina</taxon>
        <taxon>Agaricomycetes</taxon>
        <taxon>Agaricomycetidae</taxon>
        <taxon>Agaricales</taxon>
        <taxon>Agaricineae</taxon>
        <taxon>Psathyrellaceae</taxon>
        <taxon>Coprinopsis</taxon>
    </lineage>
</organism>
<keyword id="KW-0175">Coiled coil</keyword>
<keyword id="KW-0256">Endoplasmic reticulum</keyword>
<keyword id="KW-0472">Membrane</keyword>
<keyword id="KW-1185">Reference proteome</keyword>
<keyword id="KW-0812">Transmembrane</keyword>
<keyword id="KW-1133">Transmembrane helix</keyword>
<keyword id="KW-0813">Transport</keyword>
<feature type="chain" id="PRO_0000388591" description="Protein GET1">
    <location>
        <begin position="1"/>
        <end position="227"/>
    </location>
</feature>
<feature type="topological domain" description="Lumenal" evidence="1">
    <location>
        <begin position="1"/>
        <end position="3"/>
    </location>
</feature>
<feature type="transmembrane region" description="Helical" evidence="1">
    <location>
        <begin position="4"/>
        <end position="23"/>
    </location>
</feature>
<feature type="topological domain" description="Cytoplasmic" evidence="1">
    <location>
        <begin position="24"/>
        <end position="107"/>
    </location>
</feature>
<feature type="transmembrane region" description="Helical" evidence="1">
    <location>
        <begin position="108"/>
        <end position="128"/>
    </location>
</feature>
<feature type="topological domain" description="Lumenal" evidence="1">
    <location>
        <begin position="129"/>
        <end position="151"/>
    </location>
</feature>
<feature type="transmembrane region" description="Helical" evidence="1">
    <location>
        <begin position="152"/>
        <end position="168"/>
    </location>
</feature>
<feature type="topological domain" description="Cytoplasmic" evidence="1">
    <location>
        <begin position="169"/>
        <end position="227"/>
    </location>
</feature>
<feature type="region of interest" description="Disordered" evidence="2">
    <location>
        <begin position="184"/>
        <end position="227"/>
    </location>
</feature>
<feature type="coiled-coil region" evidence="1">
    <location>
        <begin position="72"/>
        <end position="96"/>
    </location>
</feature>
<feature type="compositionally biased region" description="Low complexity" evidence="2">
    <location>
        <begin position="190"/>
        <end position="211"/>
    </location>
</feature>